<name>LOLB_SHEWM</name>
<protein>
    <recommendedName>
        <fullName evidence="1">Outer-membrane lipoprotein LolB</fullName>
    </recommendedName>
</protein>
<reference key="1">
    <citation type="submission" date="2008-02" db="EMBL/GenBank/DDBJ databases">
        <title>Complete sequence of Shewanella woodyi ATCC 51908.</title>
        <authorList>
            <consortium name="US DOE Joint Genome Institute"/>
            <person name="Copeland A."/>
            <person name="Lucas S."/>
            <person name="Lapidus A."/>
            <person name="Glavina del Rio T."/>
            <person name="Dalin E."/>
            <person name="Tice H."/>
            <person name="Bruce D."/>
            <person name="Goodwin L."/>
            <person name="Pitluck S."/>
            <person name="Sims D."/>
            <person name="Brettin T."/>
            <person name="Detter J.C."/>
            <person name="Han C."/>
            <person name="Kuske C.R."/>
            <person name="Schmutz J."/>
            <person name="Larimer F."/>
            <person name="Land M."/>
            <person name="Hauser L."/>
            <person name="Kyrpides N."/>
            <person name="Lykidis A."/>
            <person name="Zhao J.-S."/>
            <person name="Richardson P."/>
        </authorList>
    </citation>
    <scope>NUCLEOTIDE SEQUENCE [LARGE SCALE GENOMIC DNA]</scope>
    <source>
        <strain>ATCC 51908 / MS32</strain>
    </source>
</reference>
<dbReference type="EMBL" id="CP000961">
    <property type="protein sequence ID" value="ACA87947.1"/>
    <property type="molecule type" value="Genomic_DNA"/>
</dbReference>
<dbReference type="RefSeq" id="WP_012326279.1">
    <property type="nucleotide sequence ID" value="NC_010506.1"/>
</dbReference>
<dbReference type="SMR" id="B1KDU5"/>
<dbReference type="STRING" id="392500.Swoo_3687"/>
<dbReference type="KEGG" id="swd:Swoo_3687"/>
<dbReference type="eggNOG" id="COG3017">
    <property type="taxonomic scope" value="Bacteria"/>
</dbReference>
<dbReference type="HOGENOM" id="CLU_092816_1_0_6"/>
<dbReference type="Proteomes" id="UP000002168">
    <property type="component" value="Chromosome"/>
</dbReference>
<dbReference type="GO" id="GO:0009279">
    <property type="term" value="C:cell outer membrane"/>
    <property type="evidence" value="ECO:0007669"/>
    <property type="project" value="UniProtKB-SubCell"/>
</dbReference>
<dbReference type="GO" id="GO:0044874">
    <property type="term" value="P:lipoprotein localization to outer membrane"/>
    <property type="evidence" value="ECO:0007669"/>
    <property type="project" value="UniProtKB-UniRule"/>
</dbReference>
<dbReference type="GO" id="GO:0015031">
    <property type="term" value="P:protein transport"/>
    <property type="evidence" value="ECO:0007669"/>
    <property type="project" value="UniProtKB-KW"/>
</dbReference>
<dbReference type="CDD" id="cd16326">
    <property type="entry name" value="LolB"/>
    <property type="match status" value="1"/>
</dbReference>
<dbReference type="Gene3D" id="2.50.20.10">
    <property type="entry name" value="Lipoprotein localisation LolA/LolB/LppX"/>
    <property type="match status" value="1"/>
</dbReference>
<dbReference type="HAMAP" id="MF_00233">
    <property type="entry name" value="LolB"/>
    <property type="match status" value="1"/>
</dbReference>
<dbReference type="InterPro" id="IPR029046">
    <property type="entry name" value="LolA/LolB/LppX"/>
</dbReference>
<dbReference type="InterPro" id="IPR004565">
    <property type="entry name" value="OM_lipoprot_LolB"/>
</dbReference>
<dbReference type="NCBIfam" id="TIGR00548">
    <property type="entry name" value="lolB"/>
    <property type="match status" value="1"/>
</dbReference>
<dbReference type="Pfam" id="PF03550">
    <property type="entry name" value="LolB"/>
    <property type="match status" value="1"/>
</dbReference>
<dbReference type="SUPFAM" id="SSF89392">
    <property type="entry name" value="Prokaryotic lipoproteins and lipoprotein localization factors"/>
    <property type="match status" value="1"/>
</dbReference>
<gene>
    <name evidence="1" type="primary">lolB</name>
    <name type="ordered locus">Swoo_3687</name>
</gene>
<comment type="function">
    <text evidence="1">Plays a critical role in the incorporation of lipoproteins in the outer membrane after they are released by the LolA protein.</text>
</comment>
<comment type="subunit">
    <text evidence="1">Monomer.</text>
</comment>
<comment type="subcellular location">
    <subcellularLocation>
        <location evidence="1">Cell outer membrane</location>
        <topology evidence="1">Lipid-anchor</topology>
    </subcellularLocation>
</comment>
<comment type="similarity">
    <text evidence="1">Belongs to the LolB family.</text>
</comment>
<accession>B1KDU5</accession>
<proteinExistence type="inferred from homology"/>
<organism>
    <name type="scientific">Shewanella woodyi (strain ATCC 51908 / MS32)</name>
    <dbReference type="NCBI Taxonomy" id="392500"/>
    <lineage>
        <taxon>Bacteria</taxon>
        <taxon>Pseudomonadati</taxon>
        <taxon>Pseudomonadota</taxon>
        <taxon>Gammaproteobacteria</taxon>
        <taxon>Alteromonadales</taxon>
        <taxon>Shewanellaceae</taxon>
        <taxon>Shewanella</taxon>
    </lineage>
</organism>
<feature type="signal peptide" evidence="1">
    <location>
        <begin position="1"/>
        <end position="24"/>
    </location>
</feature>
<feature type="chain" id="PRO_1000100510" description="Outer-membrane lipoprotein LolB">
    <location>
        <begin position="25"/>
        <end position="213"/>
    </location>
</feature>
<feature type="lipid moiety-binding region" description="N-palmitoyl cysteine" evidence="1">
    <location>
        <position position="25"/>
    </location>
</feature>
<feature type="lipid moiety-binding region" description="S-diacylglycerol cysteine" evidence="1">
    <location>
        <position position="25"/>
    </location>
</feature>
<sequence length="213" mass="24039">MNNLSYFTKTKLVWVILSLSLLSACATKTPDNLIPVQVNHVSQAQAWEMQGKLAVRTADDKFSTNLYWLHTADINELKLTTMLGTTLLSLTTEEGVAKLEVDGKVYQHDDAQELLTEITGWSIPVNALPLWITGQAAQDDKIINQDLQLRPTVLLSEKDSPPWRVEFNSWQKQSGAEIPRLLELTREQLRLKIQISQWQALSATTLATNNQKK</sequence>
<evidence type="ECO:0000255" key="1">
    <source>
        <dbReference type="HAMAP-Rule" id="MF_00233"/>
    </source>
</evidence>
<keyword id="KW-0998">Cell outer membrane</keyword>
<keyword id="KW-0143">Chaperone</keyword>
<keyword id="KW-0449">Lipoprotein</keyword>
<keyword id="KW-0472">Membrane</keyword>
<keyword id="KW-0564">Palmitate</keyword>
<keyword id="KW-0653">Protein transport</keyword>
<keyword id="KW-1185">Reference proteome</keyword>
<keyword id="KW-0732">Signal</keyword>
<keyword id="KW-0813">Transport</keyword>